<protein>
    <recommendedName>
        <fullName evidence="1">Cysteine--tRNA ligase</fullName>
        <ecNumber evidence="1">6.1.1.16</ecNumber>
    </recommendedName>
    <alternativeName>
        <fullName evidence="1">Cysteinyl-tRNA synthetase</fullName>
        <shortName evidence="1">CysRS</shortName>
    </alternativeName>
</protein>
<dbReference type="EC" id="6.1.1.16" evidence="1"/>
<dbReference type="EMBL" id="AP008937">
    <property type="protein sequence ID" value="BAG26597.1"/>
    <property type="molecule type" value="Genomic_DNA"/>
</dbReference>
<dbReference type="RefSeq" id="WP_004562738.1">
    <property type="nucleotide sequence ID" value="NC_010610.1"/>
</dbReference>
<dbReference type="SMR" id="B2GAB5"/>
<dbReference type="GeneID" id="83715418"/>
<dbReference type="KEGG" id="lfe:LAF_0261"/>
<dbReference type="eggNOG" id="COG0215">
    <property type="taxonomic scope" value="Bacteria"/>
</dbReference>
<dbReference type="HOGENOM" id="CLU_013528_0_1_9"/>
<dbReference type="Proteomes" id="UP000001697">
    <property type="component" value="Chromosome"/>
</dbReference>
<dbReference type="GO" id="GO:0005829">
    <property type="term" value="C:cytosol"/>
    <property type="evidence" value="ECO:0007669"/>
    <property type="project" value="TreeGrafter"/>
</dbReference>
<dbReference type="GO" id="GO:0005524">
    <property type="term" value="F:ATP binding"/>
    <property type="evidence" value="ECO:0007669"/>
    <property type="project" value="UniProtKB-UniRule"/>
</dbReference>
<dbReference type="GO" id="GO:0004817">
    <property type="term" value="F:cysteine-tRNA ligase activity"/>
    <property type="evidence" value="ECO:0007669"/>
    <property type="project" value="UniProtKB-UniRule"/>
</dbReference>
<dbReference type="GO" id="GO:0008270">
    <property type="term" value="F:zinc ion binding"/>
    <property type="evidence" value="ECO:0007669"/>
    <property type="project" value="UniProtKB-UniRule"/>
</dbReference>
<dbReference type="GO" id="GO:0006423">
    <property type="term" value="P:cysteinyl-tRNA aminoacylation"/>
    <property type="evidence" value="ECO:0007669"/>
    <property type="project" value="UniProtKB-UniRule"/>
</dbReference>
<dbReference type="CDD" id="cd00672">
    <property type="entry name" value="CysRS_core"/>
    <property type="match status" value="1"/>
</dbReference>
<dbReference type="FunFam" id="3.40.50.620:FF:000009">
    <property type="entry name" value="Cysteine--tRNA ligase"/>
    <property type="match status" value="1"/>
</dbReference>
<dbReference type="Gene3D" id="1.20.120.1910">
    <property type="entry name" value="Cysteine-tRNA ligase, C-terminal anti-codon recognition domain"/>
    <property type="match status" value="1"/>
</dbReference>
<dbReference type="Gene3D" id="3.40.50.620">
    <property type="entry name" value="HUPs"/>
    <property type="match status" value="1"/>
</dbReference>
<dbReference type="HAMAP" id="MF_00041">
    <property type="entry name" value="Cys_tRNA_synth"/>
    <property type="match status" value="1"/>
</dbReference>
<dbReference type="InterPro" id="IPR015803">
    <property type="entry name" value="Cys-tRNA-ligase"/>
</dbReference>
<dbReference type="InterPro" id="IPR015273">
    <property type="entry name" value="Cys-tRNA-synt_Ia_DALR"/>
</dbReference>
<dbReference type="InterPro" id="IPR024909">
    <property type="entry name" value="Cys-tRNA/MSH_ligase"/>
</dbReference>
<dbReference type="InterPro" id="IPR056411">
    <property type="entry name" value="CysS_C"/>
</dbReference>
<dbReference type="InterPro" id="IPR014729">
    <property type="entry name" value="Rossmann-like_a/b/a_fold"/>
</dbReference>
<dbReference type="InterPro" id="IPR032678">
    <property type="entry name" value="tRNA-synt_1_cat_dom"/>
</dbReference>
<dbReference type="InterPro" id="IPR009080">
    <property type="entry name" value="tRNAsynth_Ia_anticodon-bd"/>
</dbReference>
<dbReference type="NCBIfam" id="TIGR00435">
    <property type="entry name" value="cysS"/>
    <property type="match status" value="1"/>
</dbReference>
<dbReference type="PANTHER" id="PTHR10890:SF3">
    <property type="entry name" value="CYSTEINE--TRNA LIGASE, CYTOPLASMIC"/>
    <property type="match status" value="1"/>
</dbReference>
<dbReference type="PANTHER" id="PTHR10890">
    <property type="entry name" value="CYSTEINYL-TRNA SYNTHETASE"/>
    <property type="match status" value="1"/>
</dbReference>
<dbReference type="Pfam" id="PF23493">
    <property type="entry name" value="CysS_C"/>
    <property type="match status" value="1"/>
</dbReference>
<dbReference type="Pfam" id="PF09190">
    <property type="entry name" value="DALR_2"/>
    <property type="match status" value="1"/>
</dbReference>
<dbReference type="Pfam" id="PF01406">
    <property type="entry name" value="tRNA-synt_1e"/>
    <property type="match status" value="1"/>
</dbReference>
<dbReference type="PRINTS" id="PR00983">
    <property type="entry name" value="TRNASYNTHCYS"/>
</dbReference>
<dbReference type="SMART" id="SM00840">
    <property type="entry name" value="DALR_2"/>
    <property type="match status" value="1"/>
</dbReference>
<dbReference type="SUPFAM" id="SSF47323">
    <property type="entry name" value="Anticodon-binding domain of a subclass of class I aminoacyl-tRNA synthetases"/>
    <property type="match status" value="1"/>
</dbReference>
<dbReference type="SUPFAM" id="SSF52374">
    <property type="entry name" value="Nucleotidylyl transferase"/>
    <property type="match status" value="1"/>
</dbReference>
<organism>
    <name type="scientific">Limosilactobacillus fermentum (strain NBRC 3956 / LMG 18251)</name>
    <name type="common">Lactobacillus fermentum</name>
    <dbReference type="NCBI Taxonomy" id="334390"/>
    <lineage>
        <taxon>Bacteria</taxon>
        <taxon>Bacillati</taxon>
        <taxon>Bacillota</taxon>
        <taxon>Bacilli</taxon>
        <taxon>Lactobacillales</taxon>
        <taxon>Lactobacillaceae</taxon>
        <taxon>Limosilactobacillus</taxon>
    </lineage>
</organism>
<feature type="chain" id="PRO_1000090850" description="Cysteine--tRNA ligase">
    <location>
        <begin position="1"/>
        <end position="472"/>
    </location>
</feature>
<feature type="short sequence motif" description="'HIGH' region">
    <location>
        <begin position="30"/>
        <end position="40"/>
    </location>
</feature>
<feature type="short sequence motif" description="'KMSKS' region">
    <location>
        <begin position="271"/>
        <end position="275"/>
    </location>
</feature>
<feature type="binding site" evidence="1">
    <location>
        <position position="28"/>
    </location>
    <ligand>
        <name>Zn(2+)</name>
        <dbReference type="ChEBI" id="CHEBI:29105"/>
    </ligand>
</feature>
<feature type="binding site" evidence="1">
    <location>
        <position position="212"/>
    </location>
    <ligand>
        <name>Zn(2+)</name>
        <dbReference type="ChEBI" id="CHEBI:29105"/>
    </ligand>
</feature>
<feature type="binding site" evidence="1">
    <location>
        <position position="237"/>
    </location>
    <ligand>
        <name>Zn(2+)</name>
        <dbReference type="ChEBI" id="CHEBI:29105"/>
    </ligand>
</feature>
<feature type="binding site" evidence="1">
    <location>
        <position position="241"/>
    </location>
    <ligand>
        <name>Zn(2+)</name>
        <dbReference type="ChEBI" id="CHEBI:29105"/>
    </ligand>
</feature>
<feature type="binding site" evidence="1">
    <location>
        <position position="274"/>
    </location>
    <ligand>
        <name>ATP</name>
        <dbReference type="ChEBI" id="CHEBI:30616"/>
    </ligand>
</feature>
<proteinExistence type="inferred from homology"/>
<comment type="catalytic activity">
    <reaction evidence="1">
        <text>tRNA(Cys) + L-cysteine + ATP = L-cysteinyl-tRNA(Cys) + AMP + diphosphate</text>
        <dbReference type="Rhea" id="RHEA:17773"/>
        <dbReference type="Rhea" id="RHEA-COMP:9661"/>
        <dbReference type="Rhea" id="RHEA-COMP:9679"/>
        <dbReference type="ChEBI" id="CHEBI:30616"/>
        <dbReference type="ChEBI" id="CHEBI:33019"/>
        <dbReference type="ChEBI" id="CHEBI:35235"/>
        <dbReference type="ChEBI" id="CHEBI:78442"/>
        <dbReference type="ChEBI" id="CHEBI:78517"/>
        <dbReference type="ChEBI" id="CHEBI:456215"/>
        <dbReference type="EC" id="6.1.1.16"/>
    </reaction>
</comment>
<comment type="cofactor">
    <cofactor evidence="1">
        <name>Zn(2+)</name>
        <dbReference type="ChEBI" id="CHEBI:29105"/>
    </cofactor>
    <text evidence="1">Binds 1 zinc ion per subunit.</text>
</comment>
<comment type="subunit">
    <text evidence="1">Monomer.</text>
</comment>
<comment type="subcellular location">
    <subcellularLocation>
        <location evidence="1">Cytoplasm</location>
    </subcellularLocation>
</comment>
<comment type="similarity">
    <text evidence="1">Belongs to the class-I aminoacyl-tRNA synthetase family.</text>
</comment>
<reference key="1">
    <citation type="journal article" date="2008" name="DNA Res.">
        <title>Comparative genome analysis of Lactobacillus reuteri and Lactobacillus fermentum reveal a genomic island for reuterin and cobalamin production.</title>
        <authorList>
            <person name="Morita H."/>
            <person name="Toh H."/>
            <person name="Fukuda S."/>
            <person name="Horikawa H."/>
            <person name="Oshima K."/>
            <person name="Suzuki T."/>
            <person name="Murakami M."/>
            <person name="Hisamatsu S."/>
            <person name="Kato Y."/>
            <person name="Takizawa T."/>
            <person name="Fukuoka H."/>
            <person name="Yoshimura T."/>
            <person name="Itoh K."/>
            <person name="O'Sullivan D.J."/>
            <person name="McKay L.L."/>
            <person name="Ohno H."/>
            <person name="Kikuchi J."/>
            <person name="Masaoka T."/>
            <person name="Hattori M."/>
        </authorList>
    </citation>
    <scope>NUCLEOTIDE SEQUENCE [LARGE SCALE GENOMIC DNA]</scope>
    <source>
        <strain>NBRC 3956 / LMG 18251</strain>
    </source>
</reference>
<gene>
    <name evidence="1" type="primary">cysS</name>
    <name type="ordered locus">LAF_0261</name>
</gene>
<sequence>MLKIYNTLTRQKEEFHPQQAGIVNMYVCGPTVYNYIHIGNARSVVAFDTVRRYLEFSGYQVNYVSNFTDVDDKMIKAAKEQGITVPELAYKYIQAYMEDTAALNVEPATTHPRATENIDGIISFIEDLIEKGYAYQSGGDVYYRARKFAHYGQLSGQSLDDLEVGASEHVSTEEVAKKKDPLDFALWKAAKPGEIKWDSPWGAGRPGWHIECSVMSTKYLGDTLDIHAGGQDLEFPHHENEIAQSEAKTGHRFVNYWMHNGFVTIGRDNEKMSKSLGNFVTVHDLIKEVDPQVLRFFMSTTQYRRPIQYSQESLVEAQANLEHLKNTYDNLAYRLKDATSGTDGGVQRQLADFRARFVAAMDDDINVQNGIAVVYELMRFANQYVEQRLVQREPIVAIQLMLKRLVAVFGVDLAVSATEINDEKIKELIEKRNAARAEKDFALSDQIRDQLRDQGIILEDTPQGTRYRKESN</sequence>
<accession>B2GAB5</accession>
<keyword id="KW-0030">Aminoacyl-tRNA synthetase</keyword>
<keyword id="KW-0067">ATP-binding</keyword>
<keyword id="KW-0963">Cytoplasm</keyword>
<keyword id="KW-0436">Ligase</keyword>
<keyword id="KW-0479">Metal-binding</keyword>
<keyword id="KW-0547">Nucleotide-binding</keyword>
<keyword id="KW-0648">Protein biosynthesis</keyword>
<keyword id="KW-1185">Reference proteome</keyword>
<keyword id="KW-0862">Zinc</keyword>
<evidence type="ECO:0000255" key="1">
    <source>
        <dbReference type="HAMAP-Rule" id="MF_00041"/>
    </source>
</evidence>
<name>SYC_LIMF3</name>